<organism>
    <name type="scientific">Mycoplasma pneumoniae (strain ATCC 29342 / M129 / Subtype 1)</name>
    <name type="common">Mycoplasmoides pneumoniae</name>
    <dbReference type="NCBI Taxonomy" id="272634"/>
    <lineage>
        <taxon>Bacteria</taxon>
        <taxon>Bacillati</taxon>
        <taxon>Mycoplasmatota</taxon>
        <taxon>Mycoplasmoidales</taxon>
        <taxon>Mycoplasmoidaceae</taxon>
        <taxon>Mycoplasmoides</taxon>
    </lineage>
</organism>
<name>DPO3B_MYCPN</name>
<dbReference type="EMBL" id="U34816">
    <property type="protein sequence ID" value="AAC43645.1"/>
    <property type="molecule type" value="Genomic_DNA"/>
</dbReference>
<dbReference type="EMBL" id="U00089">
    <property type="protein sequence ID" value="AAG34739.1"/>
    <property type="molecule type" value="Genomic_DNA"/>
</dbReference>
<dbReference type="PIR" id="S62836">
    <property type="entry name" value="S62836"/>
</dbReference>
<dbReference type="RefSeq" id="NP_109689.1">
    <property type="nucleotide sequence ID" value="NC_000912.1"/>
</dbReference>
<dbReference type="RefSeq" id="WP_010874358.1">
    <property type="nucleotide sequence ID" value="NZ_OU342337.1"/>
</dbReference>
<dbReference type="SMR" id="Q50313"/>
<dbReference type="IntAct" id="Q50313">
    <property type="interactions" value="1"/>
</dbReference>
<dbReference type="STRING" id="272634.MPN_001"/>
<dbReference type="EnsemblBacteria" id="AAG34739">
    <property type="protein sequence ID" value="AAG34739"/>
    <property type="gene ID" value="MPN_001"/>
</dbReference>
<dbReference type="KEGG" id="mpn:MPN_001"/>
<dbReference type="PATRIC" id="fig|272634.6.peg.1"/>
<dbReference type="HOGENOM" id="CLU_727268_0_0_14"/>
<dbReference type="OrthoDB" id="397417at2"/>
<dbReference type="BioCyc" id="MPNE272634:G1GJ3-4-MONOMER"/>
<dbReference type="Proteomes" id="UP000000808">
    <property type="component" value="Chromosome"/>
</dbReference>
<dbReference type="GO" id="GO:0005737">
    <property type="term" value="C:cytoplasm"/>
    <property type="evidence" value="ECO:0007669"/>
    <property type="project" value="UniProtKB-SubCell"/>
</dbReference>
<dbReference type="GO" id="GO:0009360">
    <property type="term" value="C:DNA polymerase III complex"/>
    <property type="evidence" value="ECO:0007669"/>
    <property type="project" value="InterPro"/>
</dbReference>
<dbReference type="GO" id="GO:0008408">
    <property type="term" value="F:3'-5' exonuclease activity"/>
    <property type="evidence" value="ECO:0007669"/>
    <property type="project" value="InterPro"/>
</dbReference>
<dbReference type="GO" id="GO:0003677">
    <property type="term" value="F:DNA binding"/>
    <property type="evidence" value="ECO:0007669"/>
    <property type="project" value="UniProtKB-KW"/>
</dbReference>
<dbReference type="GO" id="GO:0003887">
    <property type="term" value="F:DNA-directed DNA polymerase activity"/>
    <property type="evidence" value="ECO:0007669"/>
    <property type="project" value="UniProtKB-KW"/>
</dbReference>
<dbReference type="GO" id="GO:0006271">
    <property type="term" value="P:DNA strand elongation involved in DNA replication"/>
    <property type="evidence" value="ECO:0007669"/>
    <property type="project" value="TreeGrafter"/>
</dbReference>
<dbReference type="Gene3D" id="3.70.10.10">
    <property type="match status" value="1"/>
</dbReference>
<dbReference type="Gene3D" id="3.10.150.10">
    <property type="entry name" value="DNA Polymerase III, subunit A, domain 2"/>
    <property type="match status" value="1"/>
</dbReference>
<dbReference type="InterPro" id="IPR046938">
    <property type="entry name" value="DNA_clamp_sf"/>
</dbReference>
<dbReference type="InterPro" id="IPR001001">
    <property type="entry name" value="DNA_polIII_beta"/>
</dbReference>
<dbReference type="InterPro" id="IPR022635">
    <property type="entry name" value="DNA_polIII_beta_C"/>
</dbReference>
<dbReference type="InterPro" id="IPR022634">
    <property type="entry name" value="DNA_polIII_beta_N"/>
</dbReference>
<dbReference type="NCBIfam" id="TIGR00663">
    <property type="entry name" value="dnan"/>
    <property type="match status" value="1"/>
</dbReference>
<dbReference type="PANTHER" id="PTHR30478:SF0">
    <property type="entry name" value="BETA SLIDING CLAMP"/>
    <property type="match status" value="1"/>
</dbReference>
<dbReference type="PANTHER" id="PTHR30478">
    <property type="entry name" value="DNA POLYMERASE III SUBUNIT BETA"/>
    <property type="match status" value="1"/>
</dbReference>
<dbReference type="Pfam" id="PF00712">
    <property type="entry name" value="DNA_pol3_beta"/>
    <property type="match status" value="1"/>
</dbReference>
<dbReference type="Pfam" id="PF02768">
    <property type="entry name" value="DNA_pol3_beta_3"/>
    <property type="match status" value="1"/>
</dbReference>
<dbReference type="SMART" id="SM00480">
    <property type="entry name" value="POL3Bc"/>
    <property type="match status" value="1"/>
</dbReference>
<dbReference type="SUPFAM" id="SSF55979">
    <property type="entry name" value="DNA clamp"/>
    <property type="match status" value="3"/>
</dbReference>
<protein>
    <recommendedName>
        <fullName>Beta sliding clamp</fullName>
        <shortName>Beta clamp</shortName>
        <shortName>Sliding clamp</shortName>
    </recommendedName>
    <alternativeName>
        <fullName>Beta-clamp processivity factor</fullName>
    </alternativeName>
    <alternativeName>
        <fullName>DNA polymerase III beta sliding clamp subunit</fullName>
    </alternativeName>
    <alternativeName>
        <fullName>DNA polymerase III subunit beta</fullName>
    </alternativeName>
</protein>
<accession>Q50313</accession>
<proteinExistence type="inferred from homology"/>
<reference key="1">
    <citation type="journal article" date="1996" name="Nucleic Acids Res.">
        <title>Sequence analysis of 56 kb from the genome of the bacterium Mycoplasma pneumoniae comprising the dnaA region, the atp operon and a cluster of ribosomal protein genes.</title>
        <authorList>
            <person name="Hilbert H."/>
            <person name="Himmelreich R."/>
            <person name="Plagens H."/>
            <person name="Herrmann R."/>
        </authorList>
    </citation>
    <scope>NUCLEOTIDE SEQUENCE [GENOMIC DNA]</scope>
    <source>
        <strain>ATCC 29342 / M129 / Subtype 1</strain>
    </source>
</reference>
<reference key="2">
    <citation type="journal article" date="1996" name="Nucleic Acids Res.">
        <title>Complete sequence analysis of the genome of the bacterium Mycoplasma pneumoniae.</title>
        <authorList>
            <person name="Himmelreich R."/>
            <person name="Hilbert H."/>
            <person name="Plagens H."/>
            <person name="Pirkl E."/>
            <person name="Li B.-C."/>
            <person name="Herrmann R."/>
        </authorList>
    </citation>
    <scope>NUCLEOTIDE SEQUENCE [LARGE SCALE GENOMIC DNA]</scope>
    <source>
        <strain>ATCC 29342 / M129 / Subtype 1</strain>
    </source>
</reference>
<sequence>MKVLINKNELNKILKKLNNVIVSNNKMKPYHSYLLIEATEKEINFYANNEYFSAKCTLAENIDVLEEGEVIVKGKIFSELINGIKEDIITIQEKDQTLLVKTKKTNINLNTIDKKEFPRIRFNQNVDLKEFDELKIQHSLLTKGLKKIAHAVSTFRESTRKFNGVNFNGSNGKQIFLEASDSYKLSVYEIKQKTDPFNFIVETNLLSFINSFNPEGGDLISIFFRKEHKDDLSTELLIKLDNFLINYTSINESFPRVMQLFDFEPETKVTIQKNELKDALQRILTLAQNERFFLCDMQVTNSHLKINSNVQNIGASLEEVTCLKFEGHKLNIAVNALSLLEHIDSFDTDEIELYFQGSNKYFLISSNNEPELKEILVPSK</sequence>
<evidence type="ECO:0000250" key="1">
    <source>
        <dbReference type="UniProtKB" id="P0A988"/>
    </source>
</evidence>
<evidence type="ECO:0000305" key="2"/>
<keyword id="KW-0963">Cytoplasm</keyword>
<keyword id="KW-0235">DNA replication</keyword>
<keyword id="KW-0238">DNA-binding</keyword>
<keyword id="KW-0239">DNA-directed DNA polymerase</keyword>
<keyword id="KW-0548">Nucleotidyltransferase</keyword>
<keyword id="KW-1185">Reference proteome</keyword>
<keyword id="KW-0808">Transferase</keyword>
<feature type="chain" id="PRO_0000105446" description="Beta sliding clamp">
    <location>
        <begin position="1"/>
        <end position="380"/>
    </location>
</feature>
<comment type="function">
    <text evidence="1">Confers DNA tethering and processivity to DNA polymerases and other proteins. Acts as a clamp, forming a ring around DNA (a reaction catalyzed by the clamp-loading complex) which diffuses in an ATP-independent manner freely and bidirectionally along dsDNA. Initially characterized for its ability to contact the catalytic subunit of DNA polymerase III (Pol III), a complex, multichain enzyme responsible for most of the replicative synthesis in bacteria; Pol III exhibits 3'-5' exonuclease proofreading activity. The beta chain is required for initiation of replication as well as for processivity of DNA replication.</text>
</comment>
<comment type="subunit">
    <text evidence="1">Forms a ring-shaped head-to-tail homodimer around DNA which binds and tethers DNA polymerases and other proteins to the DNA. The DNA replisome complex has a single clamp-loading complex (3 tau and 1 each of delta, delta', psi and chi subunits) which binds 3 Pol III cores (1 core on the leading strand and 2 on the lagging strand) each with a beta sliding clamp dimer. Additional proteins in the replisome are other copies of gamma, psi and chi, Ssb, DNA helicase and RNA primase.</text>
</comment>
<comment type="subcellular location">
    <subcellularLocation>
        <location evidence="1">Cytoplasm</location>
    </subcellularLocation>
</comment>
<comment type="similarity">
    <text evidence="2">Belongs to the beta sliding clamp family.</text>
</comment>
<gene>
    <name type="primary">dnaN</name>
    <name type="ordered locus">MPN_001</name>
    <name type="ORF">MP153</name>
</gene>